<accession>A2SBC3</accession>
<keyword id="KW-0456">Lyase</keyword>
<keyword id="KW-0659">Purine metabolism</keyword>
<sequence>MKTLSIEPLTRAAFAPFGDVIETQGAKQIPINLGTTMRFHDLAKIDVADEGGRPLVNLFRGQPRTLPFEVTMLERHPLGSQAFVPLTDRPYIVVVAPAGDLDASKIRAFVTSGWQGVNYAKGVWHHPLIALGEVSDFIVVDRGGDGRNLNEQNLPESLWLTDDALLAVGA</sequence>
<reference key="1">
    <citation type="journal article" date="2010" name="Genome Biol. Evol.">
        <title>Continuing evolution of Burkholderia mallei through genome reduction and large-scale rearrangements.</title>
        <authorList>
            <person name="Losada L."/>
            <person name="Ronning C.M."/>
            <person name="DeShazer D."/>
            <person name="Woods D."/>
            <person name="Fedorova N."/>
            <person name="Kim H.S."/>
            <person name="Shabalina S.A."/>
            <person name="Pearson T.R."/>
            <person name="Brinkac L."/>
            <person name="Tan P."/>
            <person name="Nandi T."/>
            <person name="Crabtree J."/>
            <person name="Badger J."/>
            <person name="Beckstrom-Sternberg S."/>
            <person name="Saqib M."/>
            <person name="Schutzer S.E."/>
            <person name="Keim P."/>
            <person name="Nierman W.C."/>
        </authorList>
    </citation>
    <scope>NUCLEOTIDE SEQUENCE [LARGE SCALE GENOMIC DNA]</scope>
    <source>
        <strain>NCTC 10229</strain>
    </source>
</reference>
<feature type="chain" id="PRO_1000061348" description="Ureidoglycolate lyase">
    <location>
        <begin position="1"/>
        <end position="170"/>
    </location>
</feature>
<comment type="function">
    <text evidence="1">Catalyzes the catabolism of the allantoin degradation intermediate (S)-ureidoglycolate, generating urea and glyoxylate. Involved in the utilization of allantoin as nitrogen source.</text>
</comment>
<comment type="catalytic activity">
    <reaction evidence="1">
        <text>(S)-ureidoglycolate = urea + glyoxylate</text>
        <dbReference type="Rhea" id="RHEA:11304"/>
        <dbReference type="ChEBI" id="CHEBI:16199"/>
        <dbReference type="ChEBI" id="CHEBI:36655"/>
        <dbReference type="ChEBI" id="CHEBI:57296"/>
        <dbReference type="EC" id="4.3.2.3"/>
    </reaction>
</comment>
<comment type="cofactor">
    <cofactor evidence="1">
        <name>Ni(2+)</name>
        <dbReference type="ChEBI" id="CHEBI:49786"/>
    </cofactor>
</comment>
<comment type="pathway">
    <text evidence="1">Nitrogen metabolism; (S)-allantoin degradation.</text>
</comment>
<comment type="subunit">
    <text evidence="1">Homodimer.</text>
</comment>
<comment type="similarity">
    <text evidence="1">Belongs to the ureidoglycolate lyase family.</text>
</comment>
<name>ALLA_BURM9</name>
<organism>
    <name type="scientific">Burkholderia mallei (strain NCTC 10229)</name>
    <dbReference type="NCBI Taxonomy" id="412022"/>
    <lineage>
        <taxon>Bacteria</taxon>
        <taxon>Pseudomonadati</taxon>
        <taxon>Pseudomonadota</taxon>
        <taxon>Betaproteobacteria</taxon>
        <taxon>Burkholderiales</taxon>
        <taxon>Burkholderiaceae</taxon>
        <taxon>Burkholderia</taxon>
        <taxon>pseudomallei group</taxon>
    </lineage>
</organism>
<dbReference type="EC" id="4.3.2.3" evidence="1"/>
<dbReference type="EMBL" id="CP000546">
    <property type="protein sequence ID" value="ABN03197.1"/>
    <property type="molecule type" value="Genomic_DNA"/>
</dbReference>
<dbReference type="RefSeq" id="WP_004193471.1">
    <property type="nucleotide sequence ID" value="NC_008836.1"/>
</dbReference>
<dbReference type="SMR" id="A2SBC3"/>
<dbReference type="KEGG" id="bml:BMA10229_A3306"/>
<dbReference type="HOGENOM" id="CLU_070848_1_0_4"/>
<dbReference type="UniPathway" id="UPA00395"/>
<dbReference type="Proteomes" id="UP000002283">
    <property type="component" value="Chromosome I"/>
</dbReference>
<dbReference type="GO" id="GO:0004848">
    <property type="term" value="F:ureidoglycolate hydrolase activity"/>
    <property type="evidence" value="ECO:0007669"/>
    <property type="project" value="InterPro"/>
</dbReference>
<dbReference type="GO" id="GO:0050385">
    <property type="term" value="F:ureidoglycolate lyase activity"/>
    <property type="evidence" value="ECO:0007669"/>
    <property type="project" value="UniProtKB-UniRule"/>
</dbReference>
<dbReference type="GO" id="GO:0000256">
    <property type="term" value="P:allantoin catabolic process"/>
    <property type="evidence" value="ECO:0007669"/>
    <property type="project" value="UniProtKB-UniRule"/>
</dbReference>
<dbReference type="GO" id="GO:0006145">
    <property type="term" value="P:purine nucleobase catabolic process"/>
    <property type="evidence" value="ECO:0007669"/>
    <property type="project" value="UniProtKB-UniRule"/>
</dbReference>
<dbReference type="CDD" id="cd20298">
    <property type="entry name" value="cupin_UAH"/>
    <property type="match status" value="1"/>
</dbReference>
<dbReference type="Gene3D" id="2.60.120.480">
    <property type="entry name" value="Ureidoglycolate hydrolase"/>
    <property type="match status" value="1"/>
</dbReference>
<dbReference type="HAMAP" id="MF_00616">
    <property type="entry name" value="Ureidogly_lyase"/>
    <property type="match status" value="1"/>
</dbReference>
<dbReference type="InterPro" id="IPR011051">
    <property type="entry name" value="RmlC_Cupin_sf"/>
</dbReference>
<dbReference type="InterPro" id="IPR047233">
    <property type="entry name" value="UAH_cupin"/>
</dbReference>
<dbReference type="InterPro" id="IPR007247">
    <property type="entry name" value="Ureidogly_lyase"/>
</dbReference>
<dbReference type="InterPro" id="IPR023525">
    <property type="entry name" value="Ureidogly_lyase_bac"/>
</dbReference>
<dbReference type="InterPro" id="IPR024060">
    <property type="entry name" value="Ureidoglycolate_lyase_dom_sf"/>
</dbReference>
<dbReference type="NCBIfam" id="NF002950">
    <property type="entry name" value="PRK03606.1-3"/>
    <property type="match status" value="1"/>
</dbReference>
<dbReference type="NCBIfam" id="NF009932">
    <property type="entry name" value="PRK13395.1"/>
    <property type="match status" value="1"/>
</dbReference>
<dbReference type="PANTHER" id="PTHR21221">
    <property type="entry name" value="UREIDOGLYCOLATE HYDROLASE"/>
    <property type="match status" value="1"/>
</dbReference>
<dbReference type="PANTHER" id="PTHR21221:SF1">
    <property type="entry name" value="UREIDOGLYCOLATE LYASE"/>
    <property type="match status" value="1"/>
</dbReference>
<dbReference type="Pfam" id="PF04115">
    <property type="entry name" value="Ureidogly_lyase"/>
    <property type="match status" value="1"/>
</dbReference>
<dbReference type="PIRSF" id="PIRSF017306">
    <property type="entry name" value="Ureidogly_hydro"/>
    <property type="match status" value="1"/>
</dbReference>
<dbReference type="SUPFAM" id="SSF51182">
    <property type="entry name" value="RmlC-like cupins"/>
    <property type="match status" value="1"/>
</dbReference>
<protein>
    <recommendedName>
        <fullName evidence="1">Ureidoglycolate lyase</fullName>
        <ecNumber evidence="1">4.3.2.3</ecNumber>
    </recommendedName>
    <alternativeName>
        <fullName evidence="1">Ureidoglycolatase</fullName>
    </alternativeName>
</protein>
<gene>
    <name evidence="1" type="primary">allA</name>
    <name type="ordered locus">BMA10229_A3306</name>
</gene>
<evidence type="ECO:0000255" key="1">
    <source>
        <dbReference type="HAMAP-Rule" id="MF_00616"/>
    </source>
</evidence>
<proteinExistence type="inferred from homology"/>